<feature type="chain" id="PRO_0000410464" description="Silenced mating-type protein ALPHA2">
    <location>
        <begin position="1"/>
        <end position="210"/>
    </location>
</feature>
<feature type="DNA-binding region" description="Homeobox; TALE-type" evidence="2">
    <location>
        <begin position="129"/>
        <end position="191"/>
    </location>
</feature>
<feature type="region of interest" description="N-terminal domain">
    <location>
        <begin position="1"/>
        <end position="102"/>
    </location>
</feature>
<feature type="region of interest" description="Flexible linker">
    <location>
        <begin position="103"/>
        <end position="128"/>
    </location>
</feature>
<feature type="region of interest" description="C-terminal tail">
    <location>
        <begin position="190"/>
        <end position="210"/>
    </location>
</feature>
<feature type="modified residue" description="N-acetylmethionine" evidence="1">
    <location>
        <position position="1"/>
    </location>
</feature>
<feature type="sequence conflict" description="In Ref. 1; CAA24625, 2 and 3; AAA34678." evidence="3" ref="1 2 3">
    <original>G</original>
    <variation>V</variation>
    <location>
        <position position="56"/>
    </location>
</feature>
<protein>
    <recommendedName>
        <fullName>Silenced mating-type protein ALPHA2</fullName>
        <shortName>MATalpha2 protein</shortName>
    </recommendedName>
    <alternativeName>
        <fullName>Alpha-2 repressor</fullName>
    </alternativeName>
</protein>
<organism>
    <name type="scientific">Saccharomyces cerevisiae (strain ATCC 204508 / S288c)</name>
    <name type="common">Baker's yeast</name>
    <dbReference type="NCBI Taxonomy" id="559292"/>
    <lineage>
        <taxon>Eukaryota</taxon>
        <taxon>Fungi</taxon>
        <taxon>Dikarya</taxon>
        <taxon>Ascomycota</taxon>
        <taxon>Saccharomycotina</taxon>
        <taxon>Saccharomycetes</taxon>
        <taxon>Saccharomycetales</taxon>
        <taxon>Saccharomycetaceae</taxon>
        <taxon>Saccharomyces</taxon>
    </lineage>
</organism>
<keyword id="KW-0007">Acetylation</keyword>
<keyword id="KW-0238">DNA-binding</keyword>
<keyword id="KW-0371">Homeobox</keyword>
<keyword id="KW-0539">Nucleus</keyword>
<keyword id="KW-1185">Reference proteome</keyword>
<keyword id="KW-0678">Repressor</keyword>
<keyword id="KW-0804">Transcription</keyword>
<keyword id="KW-0805">Transcription regulation</keyword>
<comment type="function">
    <text>Mating type proteins are sequence specific DNA-binding proteins that act as master switches in yeast differentiation by controlling gene expression in a cell type-specific fashion. Silenced copy of ALPHA2 at HML.</text>
</comment>
<comment type="subcellular location">
    <subcellularLocation>
        <location>Nucleus</location>
    </subcellularLocation>
</comment>
<comment type="miscellaneous">
    <text>There are three genetic loci for mating type genes in S.cerevisiae. MAT is the expression locus that determines the mating type of the cell, whereas HML (containing HMLALPHA1 and HMLALPHA2) and HMR (containing HMRA1 and HMRA2) represent silenced repositories of mating type information. The mating type is determined by the MAT locus, which contains either a copy of HML or of HMR. Diploid cells are usually heterozygous for the MAT locus.</text>
</comment>
<comment type="similarity">
    <text evidence="3">Belongs to the TALE/M-ATYP homeobox family.</text>
</comment>
<name>HMAL2_YEAST</name>
<sequence length="210" mass="24282">MNKIPIKDLLNPQITDEFKSSILDINKKLFSICCNLPKLPESVTTEEEVELRDILGFLSRANKNRKISDEEKKLLQTTSQLTTTITVLLKEMRSIENDRSNYQLTQKNKSADGLVFNVVTQDMINKSTKPYRGHRFTKENVRILESWFAKNIENPYLDTKGLENLMKNTSLSRIQIKNWVSNRRRKEKTITIAPELADLLSGEPLAKKKE</sequence>
<accession>P0CY09</accession>
<accession>D6VQV2</accession>
<accession>P01367</accession>
<accession>P01368</accession>
<accession>Q6B2C0</accession>
<gene>
    <name type="primary">HMLALPHA2</name>
    <name type="ordered locus">YCL067C</name>
    <name type="ORF">YCL67C</name>
</gene>
<dbReference type="EMBL" id="V01315">
    <property type="protein sequence ID" value="CAA24625.1"/>
    <property type="molecule type" value="Genomic_DNA"/>
</dbReference>
<dbReference type="EMBL" id="L00059">
    <property type="protein sequence ID" value="AAA34678.1"/>
    <property type="molecule type" value="Genomic_DNA"/>
</dbReference>
<dbReference type="EMBL" id="X59720">
    <property type="protein sequence ID" value="CAA42400.1"/>
    <property type="molecule type" value="Genomic_DNA"/>
</dbReference>
<dbReference type="EMBL" id="V01314">
    <property type="protein sequence ID" value="CAA24623.1"/>
    <property type="molecule type" value="Genomic_DNA"/>
</dbReference>
<dbReference type="EMBL" id="BK006937">
    <property type="protein sequence ID" value="DAA07421.1"/>
    <property type="molecule type" value="Genomic_DNA"/>
</dbReference>
<dbReference type="PIR" id="S19398">
    <property type="entry name" value="JFBYA2"/>
</dbReference>
<dbReference type="RefSeq" id="NP_009866.1">
    <property type="nucleotide sequence ID" value="NM_001178708.1"/>
</dbReference>
<dbReference type="SMR" id="P0CY09"/>
<dbReference type="BioGRID" id="30922">
    <property type="interactions" value="8"/>
</dbReference>
<dbReference type="BioGRID" id="31022">
    <property type="interactions" value="22"/>
</dbReference>
<dbReference type="FunCoup" id="P0CY09">
    <property type="interactions" value="271"/>
</dbReference>
<dbReference type="STRING" id="4932.YCL067C"/>
<dbReference type="PaxDb" id="4932-YCL067C"/>
<dbReference type="EnsemblFungi" id="YCL067C_mRNA">
    <property type="protein sequence ID" value="YCL067C"/>
    <property type="gene ID" value="YCL067C"/>
</dbReference>
<dbReference type="EnsemblFungi" id="YCR039C_mRNA">
    <property type="protein sequence ID" value="YCR039C"/>
    <property type="gene ID" value="YCR039C"/>
</dbReference>
<dbReference type="GeneID" id="850292"/>
<dbReference type="KEGG" id="sce:YCL067C"/>
<dbReference type="KEGG" id="sce:YCR039C"/>
<dbReference type="AGR" id="SGD:S000000572"/>
<dbReference type="SGD" id="S000000572">
    <property type="gene designation" value="HMLALPHA2"/>
</dbReference>
<dbReference type="VEuPathDB" id="FungiDB:YCL067C"/>
<dbReference type="VEuPathDB" id="FungiDB:YCR039C"/>
<dbReference type="eggNOG" id="KOG0773">
    <property type="taxonomic scope" value="Eukaryota"/>
</dbReference>
<dbReference type="GeneTree" id="ENSGT00940000176654"/>
<dbReference type="HOGENOM" id="CLU_091806_1_0_1"/>
<dbReference type="InParanoid" id="P0CY09"/>
<dbReference type="OMA" id="KVQIKNW"/>
<dbReference type="OrthoDB" id="4069986at2759"/>
<dbReference type="BioCyc" id="YEAST:G3O-29314-MONOMER"/>
<dbReference type="BioGRID-ORCS" id="850292">
    <property type="hits" value="0 hits in 3 CRISPR screens"/>
</dbReference>
<dbReference type="PRO" id="PR:P0CY09"/>
<dbReference type="Proteomes" id="UP000002311">
    <property type="component" value="Chromosome III"/>
</dbReference>
<dbReference type="RNAct" id="P0CY09">
    <property type="molecule type" value="protein"/>
</dbReference>
<dbReference type="ExpressionAtlas" id="P0CY09">
    <property type="expression patterns" value="baseline"/>
</dbReference>
<dbReference type="GO" id="GO:0005634">
    <property type="term" value="C:nucleus"/>
    <property type="evidence" value="ECO:0000247"/>
    <property type="project" value="SGD"/>
</dbReference>
<dbReference type="GO" id="GO:0008301">
    <property type="term" value="F:DNA binding, bending"/>
    <property type="evidence" value="ECO:0000247"/>
    <property type="project" value="SGD"/>
</dbReference>
<dbReference type="GO" id="GO:0001227">
    <property type="term" value="F:DNA-binding transcription repressor activity, RNA polymerase II-specific"/>
    <property type="evidence" value="ECO:0000247"/>
    <property type="project" value="SGD"/>
</dbReference>
<dbReference type="GO" id="GO:0007531">
    <property type="term" value="P:mating type determination"/>
    <property type="evidence" value="ECO:0000247"/>
    <property type="project" value="SGD"/>
</dbReference>
<dbReference type="GO" id="GO:0000122">
    <property type="term" value="P:negative regulation of transcription by RNA polymerase II"/>
    <property type="evidence" value="ECO:0000247"/>
    <property type="project" value="SGD"/>
</dbReference>
<dbReference type="CDD" id="cd00086">
    <property type="entry name" value="homeodomain"/>
    <property type="match status" value="1"/>
</dbReference>
<dbReference type="Gene3D" id="1.10.10.60">
    <property type="entry name" value="Homeodomain-like"/>
    <property type="match status" value="1"/>
</dbReference>
<dbReference type="InterPro" id="IPR001356">
    <property type="entry name" value="HD"/>
</dbReference>
<dbReference type="InterPro" id="IPR009057">
    <property type="entry name" value="Homeodomain-like_sf"/>
</dbReference>
<dbReference type="Pfam" id="PF00046">
    <property type="entry name" value="Homeodomain"/>
    <property type="match status" value="1"/>
</dbReference>
<dbReference type="SMART" id="SM00389">
    <property type="entry name" value="HOX"/>
    <property type="match status" value="1"/>
</dbReference>
<dbReference type="SUPFAM" id="SSF46689">
    <property type="entry name" value="Homeodomain-like"/>
    <property type="match status" value="1"/>
</dbReference>
<dbReference type="PROSITE" id="PS50071">
    <property type="entry name" value="HOMEOBOX_2"/>
    <property type="match status" value="1"/>
</dbReference>
<reference key="1">
    <citation type="journal article" date="1981" name="Cell">
        <title>The sequence of the DNAs coding for the mating-type loci of Saccharomyces cerevisiae.</title>
        <authorList>
            <person name="Astell C.R."/>
            <person name="Ahlstrom-Jonasson L."/>
            <person name="Smith M."/>
            <person name="Tatchell K."/>
            <person name="Nasmyth K.A."/>
            <person name="Hall B.D."/>
        </authorList>
    </citation>
    <scope>NUCLEOTIDE SEQUENCE [GENOMIC DNA]</scope>
</reference>
<reference key="2">
    <citation type="journal article" date="1981" name="Cell">
        <title>In vitro mutation analysis of the mating-type locus in yeast.</title>
        <authorList>
            <person name="Tatchell K."/>
            <person name="Nasmyth K.A."/>
            <person name="Hall B.D."/>
            <person name="Astell C.R."/>
            <person name="Smith M."/>
        </authorList>
    </citation>
    <scope>NUCLEOTIDE SEQUENCE [GENOMIC DNA]</scope>
</reference>
<reference key="3">
    <citation type="journal article" date="1981" name="Cold Spring Harb. Symp. Quant. Biol.">
        <title>Physical analysis of mating-type loci in Saccharomyces cerevisiae.</title>
        <authorList>
            <person name="Nasmyth K.A."/>
            <person name="Tatchell K."/>
            <person name="Hall B.D."/>
            <person name="Astell C."/>
            <person name="Smith M."/>
        </authorList>
    </citation>
    <scope>NUCLEOTIDE SEQUENCE [GENOMIC DNA]</scope>
</reference>
<reference key="4">
    <citation type="journal article" date="1992" name="Nature">
        <title>The complete DNA sequence of yeast chromosome III.</title>
        <authorList>
            <person name="Oliver S.G."/>
            <person name="van der Aart Q.J.M."/>
            <person name="Agostoni-Carbone M.L."/>
            <person name="Aigle M."/>
            <person name="Alberghina L."/>
            <person name="Alexandraki D."/>
            <person name="Antoine G."/>
            <person name="Anwar R."/>
            <person name="Ballesta J.P.G."/>
            <person name="Benit P."/>
            <person name="Berben G."/>
            <person name="Bergantino E."/>
            <person name="Biteau N."/>
            <person name="Bolle P.-A."/>
            <person name="Bolotin-Fukuhara M."/>
            <person name="Brown A."/>
            <person name="Brown A.J.P."/>
            <person name="Buhler J.-M."/>
            <person name="Carcano C."/>
            <person name="Carignani G."/>
            <person name="Cederberg H."/>
            <person name="Chanet R."/>
            <person name="Contreras R."/>
            <person name="Crouzet M."/>
            <person name="Daignan-Fornier B."/>
            <person name="Defoor E."/>
            <person name="Delgado M.D."/>
            <person name="Demolder J."/>
            <person name="Doira C."/>
            <person name="Dubois E."/>
            <person name="Dujon B."/>
            <person name="Duesterhoeft A."/>
            <person name="Erdmann D."/>
            <person name="Esteban M."/>
            <person name="Fabre F."/>
            <person name="Fairhead C."/>
            <person name="Faye G."/>
            <person name="Feldmann H."/>
            <person name="Fiers W."/>
            <person name="Francingues-Gaillard M.-C."/>
            <person name="Franco L."/>
            <person name="Frontali L."/>
            <person name="Fukuhara H."/>
            <person name="Fuller L.J."/>
            <person name="Galland P."/>
            <person name="Gent M.E."/>
            <person name="Gigot D."/>
            <person name="Gilliquet V."/>
            <person name="Glansdorff N."/>
            <person name="Goffeau A."/>
            <person name="Grenson M."/>
            <person name="Grisanti P."/>
            <person name="Grivell L.A."/>
            <person name="de Haan M."/>
            <person name="Haasemann M."/>
            <person name="Hatat D."/>
            <person name="Hoenicka J."/>
            <person name="Hegemann J.H."/>
            <person name="Herbert C.J."/>
            <person name="Hilger F."/>
            <person name="Hohmann S."/>
            <person name="Hollenberg C.P."/>
            <person name="Huse K."/>
            <person name="Iborra F."/>
            <person name="Indge K.J."/>
            <person name="Isono K."/>
            <person name="Jacq C."/>
            <person name="Jacquet M."/>
            <person name="James C.M."/>
            <person name="Jauniaux J.-C."/>
            <person name="Jia Y."/>
            <person name="Jimenez A."/>
            <person name="Kelly A."/>
            <person name="Kleinhans U."/>
            <person name="Kreisl P."/>
            <person name="Lanfranchi G."/>
            <person name="Lewis C."/>
            <person name="van der Linden C.G."/>
            <person name="Lucchini G."/>
            <person name="Lutzenkirchen K."/>
            <person name="Maat M.J."/>
            <person name="Mallet L."/>
            <person name="Mannhaupt G."/>
            <person name="Martegani E."/>
            <person name="Mathieu A."/>
            <person name="Maurer C.T.C."/>
            <person name="McConnell D."/>
            <person name="McKee R.A."/>
            <person name="Messenguy F."/>
            <person name="Mewes H.-W."/>
            <person name="Molemans F."/>
            <person name="Montague M.A."/>
            <person name="Muzi Falconi M."/>
            <person name="Navas L."/>
            <person name="Newlon C.S."/>
            <person name="Noone D."/>
            <person name="Pallier C."/>
            <person name="Panzeri L."/>
            <person name="Pearson B.M."/>
            <person name="Perea J."/>
            <person name="Philippsen P."/>
            <person name="Pierard A."/>
            <person name="Planta R.J."/>
            <person name="Plevani P."/>
            <person name="Poetsch B."/>
            <person name="Pohl F.M."/>
            <person name="Purnelle B."/>
            <person name="Ramezani Rad M."/>
            <person name="Rasmussen S.W."/>
            <person name="Raynal A."/>
            <person name="Remacha M.A."/>
            <person name="Richterich P."/>
            <person name="Roberts A.B."/>
            <person name="Rodriguez F."/>
            <person name="Sanz E."/>
            <person name="Schaaff-Gerstenschlaeger I."/>
            <person name="Scherens B."/>
            <person name="Schweitzer B."/>
            <person name="Shu Y."/>
            <person name="Skala J."/>
            <person name="Slonimski P.P."/>
            <person name="Sor F."/>
            <person name="Soustelle C."/>
            <person name="Spiegelberg R."/>
            <person name="Stateva L.I."/>
            <person name="Steensma H.Y."/>
            <person name="Steiner S."/>
            <person name="Thierry A."/>
            <person name="Thireos G."/>
            <person name="Tzermia M."/>
            <person name="Urrestarazu L.A."/>
            <person name="Valle G."/>
            <person name="Vetter I."/>
            <person name="van Vliet-Reedijk J.C."/>
            <person name="Voet M."/>
            <person name="Volckaert G."/>
            <person name="Vreken P."/>
            <person name="Wang H."/>
            <person name="Warmington J.R."/>
            <person name="von Wettstein D."/>
            <person name="Wicksteed B.L."/>
            <person name="Wilson C."/>
            <person name="Wurst H."/>
            <person name="Xu G."/>
            <person name="Yoshikawa A."/>
            <person name="Zimmermann F.K."/>
            <person name="Sgouros J.G."/>
        </authorList>
    </citation>
    <scope>NUCLEOTIDE SEQUENCE [LARGE SCALE GENOMIC DNA]</scope>
    <source>
        <strain>ATCC 204508 / S288c</strain>
    </source>
</reference>
<reference key="5">
    <citation type="journal article" date="2014" name="G3 (Bethesda)">
        <title>The reference genome sequence of Saccharomyces cerevisiae: Then and now.</title>
        <authorList>
            <person name="Engel S.R."/>
            <person name="Dietrich F.S."/>
            <person name="Fisk D.G."/>
            <person name="Binkley G."/>
            <person name="Balakrishnan R."/>
            <person name="Costanzo M.C."/>
            <person name="Dwight S.S."/>
            <person name="Hitz B.C."/>
            <person name="Karra K."/>
            <person name="Nash R.S."/>
            <person name="Weng S."/>
            <person name="Wong E.D."/>
            <person name="Lloyd P."/>
            <person name="Skrzypek M.S."/>
            <person name="Miyasato S.R."/>
            <person name="Simison M."/>
            <person name="Cherry J.M."/>
        </authorList>
    </citation>
    <scope>GENOME REANNOTATION</scope>
    <source>
        <strain>ATCC 204508 / S288c</strain>
    </source>
</reference>
<reference key="6">
    <citation type="journal article" date="1981" name="Nature">
        <title>A position effect in the control of transcription at yeast mating type loci.</title>
        <authorList>
            <person name="Nasmyth K.A."/>
            <person name="Tatchell K."/>
            <person name="Hall B.D."/>
            <person name="Astell C.R."/>
            <person name="Smith M."/>
        </authorList>
    </citation>
    <scope>NUCLEOTIDE SEQUENCE [GENOMIC DNA] OF 1-9</scope>
</reference>
<evidence type="ECO:0000250" key="1">
    <source>
        <dbReference type="UniProtKB" id="P0CY08"/>
    </source>
</evidence>
<evidence type="ECO:0000255" key="2">
    <source>
        <dbReference type="PROSITE-ProRule" id="PRU00108"/>
    </source>
</evidence>
<evidence type="ECO:0000305" key="3"/>
<proteinExistence type="inferred from homology"/>